<keyword id="KW-0963">Cytoplasm</keyword>
<keyword id="KW-0448">Lipopolysaccharide biosynthesis</keyword>
<keyword id="KW-0548">Nucleotidyltransferase</keyword>
<keyword id="KW-1185">Reference proteome</keyword>
<keyword id="KW-0808">Transferase</keyword>
<feature type="chain" id="PRO_0000370108" description="3-deoxy-manno-octulosonate cytidylyltransferase">
    <location>
        <begin position="1"/>
        <end position="254"/>
    </location>
</feature>
<name>KDSB_NITWN</name>
<accession>Q3SVY8</accession>
<dbReference type="EC" id="2.7.7.38" evidence="1"/>
<dbReference type="EMBL" id="CP000115">
    <property type="protein sequence ID" value="ABA03553.1"/>
    <property type="molecule type" value="Genomic_DNA"/>
</dbReference>
<dbReference type="RefSeq" id="WP_011313619.1">
    <property type="nucleotide sequence ID" value="NC_007406.1"/>
</dbReference>
<dbReference type="SMR" id="Q3SVY8"/>
<dbReference type="STRING" id="323098.Nwi_0286"/>
<dbReference type="KEGG" id="nwi:Nwi_0286"/>
<dbReference type="eggNOG" id="COG1212">
    <property type="taxonomic scope" value="Bacteria"/>
</dbReference>
<dbReference type="HOGENOM" id="CLU_065038_0_1_5"/>
<dbReference type="OrthoDB" id="9815559at2"/>
<dbReference type="UniPathway" id="UPA00030"/>
<dbReference type="UniPathway" id="UPA00358">
    <property type="reaction ID" value="UER00476"/>
</dbReference>
<dbReference type="Proteomes" id="UP000002531">
    <property type="component" value="Chromosome"/>
</dbReference>
<dbReference type="GO" id="GO:0005829">
    <property type="term" value="C:cytosol"/>
    <property type="evidence" value="ECO:0007669"/>
    <property type="project" value="TreeGrafter"/>
</dbReference>
<dbReference type="GO" id="GO:0008690">
    <property type="term" value="F:3-deoxy-manno-octulosonate cytidylyltransferase activity"/>
    <property type="evidence" value="ECO:0007669"/>
    <property type="project" value="UniProtKB-UniRule"/>
</dbReference>
<dbReference type="GO" id="GO:0033468">
    <property type="term" value="P:CMP-keto-3-deoxy-D-manno-octulosonic acid biosynthetic process"/>
    <property type="evidence" value="ECO:0007669"/>
    <property type="project" value="UniProtKB-UniRule"/>
</dbReference>
<dbReference type="GO" id="GO:0009103">
    <property type="term" value="P:lipopolysaccharide biosynthetic process"/>
    <property type="evidence" value="ECO:0007669"/>
    <property type="project" value="UniProtKB-UniRule"/>
</dbReference>
<dbReference type="CDD" id="cd02517">
    <property type="entry name" value="CMP-KDO-Synthetase"/>
    <property type="match status" value="1"/>
</dbReference>
<dbReference type="Gene3D" id="3.90.550.10">
    <property type="entry name" value="Spore Coat Polysaccharide Biosynthesis Protein SpsA, Chain A"/>
    <property type="match status" value="1"/>
</dbReference>
<dbReference type="HAMAP" id="MF_00057">
    <property type="entry name" value="KdsB"/>
    <property type="match status" value="1"/>
</dbReference>
<dbReference type="InterPro" id="IPR003329">
    <property type="entry name" value="Cytidylyl_trans"/>
</dbReference>
<dbReference type="InterPro" id="IPR004528">
    <property type="entry name" value="KdsB"/>
</dbReference>
<dbReference type="InterPro" id="IPR029044">
    <property type="entry name" value="Nucleotide-diphossugar_trans"/>
</dbReference>
<dbReference type="NCBIfam" id="TIGR00466">
    <property type="entry name" value="kdsB"/>
    <property type="match status" value="1"/>
</dbReference>
<dbReference type="NCBIfam" id="NF003948">
    <property type="entry name" value="PRK05450.1-1"/>
    <property type="match status" value="1"/>
</dbReference>
<dbReference type="NCBIfam" id="NF003952">
    <property type="entry name" value="PRK05450.1-5"/>
    <property type="match status" value="1"/>
</dbReference>
<dbReference type="PANTHER" id="PTHR42866">
    <property type="entry name" value="3-DEOXY-MANNO-OCTULOSONATE CYTIDYLYLTRANSFERASE"/>
    <property type="match status" value="1"/>
</dbReference>
<dbReference type="PANTHER" id="PTHR42866:SF2">
    <property type="entry name" value="3-DEOXY-MANNO-OCTULOSONATE CYTIDYLYLTRANSFERASE, MITOCHONDRIAL"/>
    <property type="match status" value="1"/>
</dbReference>
<dbReference type="Pfam" id="PF02348">
    <property type="entry name" value="CTP_transf_3"/>
    <property type="match status" value="1"/>
</dbReference>
<dbReference type="SUPFAM" id="SSF53448">
    <property type="entry name" value="Nucleotide-diphospho-sugar transferases"/>
    <property type="match status" value="1"/>
</dbReference>
<proteinExistence type="inferred from homology"/>
<gene>
    <name evidence="1" type="primary">kdsB</name>
    <name type="ordered locus">Nwi_0286</name>
</gene>
<sequence>MTENRTLVLIPARMAATRLPGKPLLDIGGLPMIVHVLRRAEAAGIGRVAVATDTSDIATAVTAHGGEAIMTRADHPSGSDRVFEALGKLDPEGRIDTVVNLQGDFPTIRPGTIREVLQPLADNAVDIATLAAEIHTEEEAANPNVVKAVGSPIGPRRLRALYFTRATAPHGEGPRYHHVGLYAYRREALQRFIELPPSPLEQQERLEQLRALEGGMRIDIMIVDDVPRGVDTATDLETARQIIACSASGEHPAR</sequence>
<protein>
    <recommendedName>
        <fullName evidence="1">3-deoxy-manno-octulosonate cytidylyltransferase</fullName>
        <ecNumber evidence="1">2.7.7.38</ecNumber>
    </recommendedName>
    <alternativeName>
        <fullName evidence="1">CMP-2-keto-3-deoxyoctulosonic acid synthase</fullName>
        <shortName evidence="1">CKS</shortName>
        <shortName evidence="1">CMP-KDO synthase</shortName>
    </alternativeName>
</protein>
<organism>
    <name type="scientific">Nitrobacter winogradskyi (strain ATCC 25391 / DSM 10237 / CIP 104748 / NCIMB 11846 / Nb-255)</name>
    <dbReference type="NCBI Taxonomy" id="323098"/>
    <lineage>
        <taxon>Bacteria</taxon>
        <taxon>Pseudomonadati</taxon>
        <taxon>Pseudomonadota</taxon>
        <taxon>Alphaproteobacteria</taxon>
        <taxon>Hyphomicrobiales</taxon>
        <taxon>Nitrobacteraceae</taxon>
        <taxon>Nitrobacter</taxon>
    </lineage>
</organism>
<comment type="function">
    <text evidence="1">Activates KDO (a required 8-carbon sugar) for incorporation into bacterial lipopolysaccharide in Gram-negative bacteria.</text>
</comment>
<comment type="catalytic activity">
    <reaction evidence="1">
        <text>3-deoxy-alpha-D-manno-oct-2-ulosonate + CTP = CMP-3-deoxy-beta-D-manno-octulosonate + diphosphate</text>
        <dbReference type="Rhea" id="RHEA:23448"/>
        <dbReference type="ChEBI" id="CHEBI:33019"/>
        <dbReference type="ChEBI" id="CHEBI:37563"/>
        <dbReference type="ChEBI" id="CHEBI:85986"/>
        <dbReference type="ChEBI" id="CHEBI:85987"/>
        <dbReference type="EC" id="2.7.7.38"/>
    </reaction>
</comment>
<comment type="pathway">
    <text evidence="1">Nucleotide-sugar biosynthesis; CMP-3-deoxy-D-manno-octulosonate biosynthesis; CMP-3-deoxy-D-manno-octulosonate from 3-deoxy-D-manno-octulosonate and CTP: step 1/1.</text>
</comment>
<comment type="pathway">
    <text evidence="1">Bacterial outer membrane biogenesis; lipopolysaccharide biosynthesis.</text>
</comment>
<comment type="subcellular location">
    <subcellularLocation>
        <location evidence="1">Cytoplasm</location>
    </subcellularLocation>
</comment>
<comment type="similarity">
    <text evidence="1">Belongs to the KdsB family.</text>
</comment>
<evidence type="ECO:0000255" key="1">
    <source>
        <dbReference type="HAMAP-Rule" id="MF_00057"/>
    </source>
</evidence>
<reference key="1">
    <citation type="journal article" date="2006" name="Appl. Environ. Microbiol.">
        <title>Genome sequence of the chemolithoautotrophic nitrite-oxidizing bacterium Nitrobacter winogradskyi Nb-255.</title>
        <authorList>
            <person name="Starkenburg S.R."/>
            <person name="Chain P.S.G."/>
            <person name="Sayavedra-Soto L.A."/>
            <person name="Hauser L."/>
            <person name="Land M.L."/>
            <person name="Larimer F.W."/>
            <person name="Malfatti S.A."/>
            <person name="Klotz M.G."/>
            <person name="Bottomley P.J."/>
            <person name="Arp D.J."/>
            <person name="Hickey W.J."/>
        </authorList>
    </citation>
    <scope>NUCLEOTIDE SEQUENCE [LARGE SCALE GENOMIC DNA]</scope>
    <source>
        <strain>ATCC 25391 / DSM 10237 / CIP 104748 / NCIMB 11846 / Nb-255</strain>
    </source>
</reference>